<gene>
    <name evidence="1" type="primary">pyrD</name>
    <name type="ordered locus">Rru_A0514</name>
</gene>
<proteinExistence type="inferred from homology"/>
<organism>
    <name type="scientific">Rhodospirillum rubrum (strain ATCC 11170 / ATH 1.1.1 / DSM 467 / LMG 4362 / NCIMB 8255 / S1)</name>
    <dbReference type="NCBI Taxonomy" id="269796"/>
    <lineage>
        <taxon>Bacteria</taxon>
        <taxon>Pseudomonadati</taxon>
        <taxon>Pseudomonadota</taxon>
        <taxon>Alphaproteobacteria</taxon>
        <taxon>Rhodospirillales</taxon>
        <taxon>Rhodospirillaceae</taxon>
        <taxon>Rhodospirillum</taxon>
    </lineage>
</organism>
<dbReference type="EC" id="1.3.5.2" evidence="1"/>
<dbReference type="EMBL" id="CP000230">
    <property type="protein sequence ID" value="ABC21318.1"/>
    <property type="molecule type" value="Genomic_DNA"/>
</dbReference>
<dbReference type="RefSeq" id="WP_011388272.1">
    <property type="nucleotide sequence ID" value="NC_007643.1"/>
</dbReference>
<dbReference type="RefSeq" id="YP_425605.1">
    <property type="nucleotide sequence ID" value="NC_007643.1"/>
</dbReference>
<dbReference type="SMR" id="Q2RX27"/>
<dbReference type="STRING" id="269796.Rru_A0514"/>
<dbReference type="EnsemblBacteria" id="ABC21318">
    <property type="protein sequence ID" value="ABC21318"/>
    <property type="gene ID" value="Rru_A0514"/>
</dbReference>
<dbReference type="KEGG" id="rru:Rru_A0514"/>
<dbReference type="PATRIC" id="fig|269796.9.peg.568"/>
<dbReference type="eggNOG" id="COG0167">
    <property type="taxonomic scope" value="Bacteria"/>
</dbReference>
<dbReference type="HOGENOM" id="CLU_013640_0_0_5"/>
<dbReference type="PhylomeDB" id="Q2RX27"/>
<dbReference type="UniPathway" id="UPA00070">
    <property type="reaction ID" value="UER00946"/>
</dbReference>
<dbReference type="Proteomes" id="UP000001929">
    <property type="component" value="Chromosome"/>
</dbReference>
<dbReference type="GO" id="GO:0005737">
    <property type="term" value="C:cytoplasm"/>
    <property type="evidence" value="ECO:0007669"/>
    <property type="project" value="InterPro"/>
</dbReference>
<dbReference type="GO" id="GO:0005886">
    <property type="term" value="C:plasma membrane"/>
    <property type="evidence" value="ECO:0007669"/>
    <property type="project" value="UniProtKB-SubCell"/>
</dbReference>
<dbReference type="GO" id="GO:0106430">
    <property type="term" value="F:dihydroorotate dehydrogenase (quinone) activity"/>
    <property type="evidence" value="ECO:0007669"/>
    <property type="project" value="UniProtKB-EC"/>
</dbReference>
<dbReference type="GO" id="GO:0006207">
    <property type="term" value="P:'de novo' pyrimidine nucleobase biosynthetic process"/>
    <property type="evidence" value="ECO:0007669"/>
    <property type="project" value="InterPro"/>
</dbReference>
<dbReference type="GO" id="GO:0044205">
    <property type="term" value="P:'de novo' UMP biosynthetic process"/>
    <property type="evidence" value="ECO:0007669"/>
    <property type="project" value="UniProtKB-UniRule"/>
</dbReference>
<dbReference type="CDD" id="cd04738">
    <property type="entry name" value="DHOD_2_like"/>
    <property type="match status" value="1"/>
</dbReference>
<dbReference type="Gene3D" id="3.20.20.70">
    <property type="entry name" value="Aldolase class I"/>
    <property type="match status" value="1"/>
</dbReference>
<dbReference type="HAMAP" id="MF_00225">
    <property type="entry name" value="DHO_dh_type2"/>
    <property type="match status" value="1"/>
</dbReference>
<dbReference type="InterPro" id="IPR013785">
    <property type="entry name" value="Aldolase_TIM"/>
</dbReference>
<dbReference type="InterPro" id="IPR050074">
    <property type="entry name" value="DHO_dehydrogenase"/>
</dbReference>
<dbReference type="InterPro" id="IPR005719">
    <property type="entry name" value="Dihydroorotate_DH_2"/>
</dbReference>
<dbReference type="InterPro" id="IPR005720">
    <property type="entry name" value="Dihydroorotate_DH_cat"/>
</dbReference>
<dbReference type="InterPro" id="IPR001295">
    <property type="entry name" value="Dihydroorotate_DH_CS"/>
</dbReference>
<dbReference type="NCBIfam" id="NF003645">
    <property type="entry name" value="PRK05286.1-2"/>
    <property type="match status" value="1"/>
</dbReference>
<dbReference type="NCBIfam" id="NF003652">
    <property type="entry name" value="PRK05286.2-5"/>
    <property type="match status" value="1"/>
</dbReference>
<dbReference type="NCBIfam" id="TIGR01036">
    <property type="entry name" value="pyrD_sub2"/>
    <property type="match status" value="1"/>
</dbReference>
<dbReference type="PANTHER" id="PTHR48109:SF4">
    <property type="entry name" value="DIHYDROOROTATE DEHYDROGENASE (QUINONE), MITOCHONDRIAL"/>
    <property type="match status" value="1"/>
</dbReference>
<dbReference type="PANTHER" id="PTHR48109">
    <property type="entry name" value="DIHYDROOROTATE DEHYDROGENASE (QUINONE), MITOCHONDRIAL-RELATED"/>
    <property type="match status" value="1"/>
</dbReference>
<dbReference type="Pfam" id="PF01180">
    <property type="entry name" value="DHO_dh"/>
    <property type="match status" value="1"/>
</dbReference>
<dbReference type="SUPFAM" id="SSF51395">
    <property type="entry name" value="FMN-linked oxidoreductases"/>
    <property type="match status" value="1"/>
</dbReference>
<dbReference type="PROSITE" id="PS00911">
    <property type="entry name" value="DHODEHASE_1"/>
    <property type="match status" value="1"/>
</dbReference>
<dbReference type="PROSITE" id="PS00912">
    <property type="entry name" value="DHODEHASE_2"/>
    <property type="match status" value="1"/>
</dbReference>
<keyword id="KW-1003">Cell membrane</keyword>
<keyword id="KW-0285">Flavoprotein</keyword>
<keyword id="KW-0288">FMN</keyword>
<keyword id="KW-0472">Membrane</keyword>
<keyword id="KW-0560">Oxidoreductase</keyword>
<keyword id="KW-0665">Pyrimidine biosynthesis</keyword>
<keyword id="KW-1185">Reference proteome</keyword>
<reference key="1">
    <citation type="journal article" date="2011" name="Stand. Genomic Sci.">
        <title>Complete genome sequence of Rhodospirillum rubrum type strain (S1).</title>
        <authorList>
            <person name="Munk A.C."/>
            <person name="Copeland A."/>
            <person name="Lucas S."/>
            <person name="Lapidus A."/>
            <person name="Del Rio T.G."/>
            <person name="Barry K."/>
            <person name="Detter J.C."/>
            <person name="Hammon N."/>
            <person name="Israni S."/>
            <person name="Pitluck S."/>
            <person name="Brettin T."/>
            <person name="Bruce D."/>
            <person name="Han C."/>
            <person name="Tapia R."/>
            <person name="Gilna P."/>
            <person name="Schmutz J."/>
            <person name="Larimer F."/>
            <person name="Land M."/>
            <person name="Kyrpides N.C."/>
            <person name="Mavromatis K."/>
            <person name="Richardson P."/>
            <person name="Rohde M."/>
            <person name="Goeker M."/>
            <person name="Klenk H.P."/>
            <person name="Zhang Y."/>
            <person name="Roberts G.P."/>
            <person name="Reslewic S."/>
            <person name="Schwartz D.C."/>
        </authorList>
    </citation>
    <scope>NUCLEOTIDE SEQUENCE [LARGE SCALE GENOMIC DNA]</scope>
    <source>
        <strain>ATCC 11170 / ATH 1.1.1 / DSM 467 / LMG 4362 / NCIMB 8255 / S1</strain>
    </source>
</reference>
<accession>Q2RX27</accession>
<protein>
    <recommendedName>
        <fullName evidence="1">Dihydroorotate dehydrogenase (quinone)</fullName>
        <ecNumber evidence="1">1.3.5.2</ecNumber>
    </recommendedName>
    <alternativeName>
        <fullName evidence="1">DHOdehase</fullName>
        <shortName evidence="1">DHOD</shortName>
        <shortName evidence="1">DHODase</shortName>
    </alternativeName>
    <alternativeName>
        <fullName evidence="1">Dihydroorotate oxidase</fullName>
    </alternativeName>
</protein>
<feature type="chain" id="PRO_0000336487" description="Dihydroorotate dehydrogenase (quinone)">
    <location>
        <begin position="1"/>
        <end position="367"/>
    </location>
</feature>
<feature type="active site" description="Nucleophile" evidence="1">
    <location>
        <position position="172"/>
    </location>
</feature>
<feature type="binding site" evidence="1">
    <location>
        <begin position="61"/>
        <end position="65"/>
    </location>
    <ligand>
        <name>FMN</name>
        <dbReference type="ChEBI" id="CHEBI:58210"/>
    </ligand>
</feature>
<feature type="binding site" evidence="1">
    <location>
        <position position="65"/>
    </location>
    <ligand>
        <name>substrate</name>
    </ligand>
</feature>
<feature type="binding site" evidence="1">
    <location>
        <position position="85"/>
    </location>
    <ligand>
        <name>FMN</name>
        <dbReference type="ChEBI" id="CHEBI:58210"/>
    </ligand>
</feature>
<feature type="binding site" evidence="1">
    <location>
        <begin position="110"/>
        <end position="114"/>
    </location>
    <ligand>
        <name>substrate</name>
    </ligand>
</feature>
<feature type="binding site" evidence="1">
    <location>
        <position position="138"/>
    </location>
    <ligand>
        <name>FMN</name>
        <dbReference type="ChEBI" id="CHEBI:58210"/>
    </ligand>
</feature>
<feature type="binding site" evidence="1">
    <location>
        <position position="169"/>
    </location>
    <ligand>
        <name>FMN</name>
        <dbReference type="ChEBI" id="CHEBI:58210"/>
    </ligand>
</feature>
<feature type="binding site" evidence="1">
    <location>
        <position position="169"/>
    </location>
    <ligand>
        <name>substrate</name>
    </ligand>
</feature>
<feature type="binding site" evidence="1">
    <location>
        <position position="174"/>
    </location>
    <ligand>
        <name>substrate</name>
    </ligand>
</feature>
<feature type="binding site" evidence="1">
    <location>
        <position position="212"/>
    </location>
    <ligand>
        <name>FMN</name>
        <dbReference type="ChEBI" id="CHEBI:58210"/>
    </ligand>
</feature>
<feature type="binding site" evidence="1">
    <location>
        <position position="240"/>
    </location>
    <ligand>
        <name>FMN</name>
        <dbReference type="ChEBI" id="CHEBI:58210"/>
    </ligand>
</feature>
<feature type="binding site" evidence="1">
    <location>
        <begin position="241"/>
        <end position="242"/>
    </location>
    <ligand>
        <name>substrate</name>
    </ligand>
</feature>
<feature type="binding site" evidence="1">
    <location>
        <position position="263"/>
    </location>
    <ligand>
        <name>FMN</name>
        <dbReference type="ChEBI" id="CHEBI:58210"/>
    </ligand>
</feature>
<feature type="binding site" evidence="1">
    <location>
        <position position="292"/>
    </location>
    <ligand>
        <name>FMN</name>
        <dbReference type="ChEBI" id="CHEBI:58210"/>
    </ligand>
</feature>
<feature type="binding site" evidence="1">
    <location>
        <begin position="313"/>
        <end position="314"/>
    </location>
    <ligand>
        <name>FMN</name>
        <dbReference type="ChEBI" id="CHEBI:58210"/>
    </ligand>
</feature>
<sequence>MADWYRLAWPLICGLDPERAHHLAIRALALGLAGHDRAADDPVLACSLWGRRFANPLGLAAGFDKNGEVADALFDLGFGFVEVGTVTPRPQAGNPRPRLFRLTQDRAVINRMGFNNQGMEAMAARFVRARPRGVLGINLGKNKTTEDAAGDYEAGIAKLAPLADYLVINVSSPNTPGLRALQGREPLSLLIARARAALDAACPGLRPPLLLKVAPDLTDEDMADIAEVALGGGLDGLICTNTTIARPKSLVSDHAGETGGLSGLPLRYRARQVIARLYGLTKGALPLIGVGGIGDGAEAYARIRAGASLIQIYSALVYEGPGLVGRIKRDLAQRLRADGFASVAEAVGADHRDPKGASGKLAPRSPL</sequence>
<name>PYRD_RHORT</name>
<comment type="function">
    <text evidence="1">Catalyzes the conversion of dihydroorotate to orotate with quinone as electron acceptor.</text>
</comment>
<comment type="catalytic activity">
    <reaction evidence="1">
        <text>(S)-dihydroorotate + a quinone = orotate + a quinol</text>
        <dbReference type="Rhea" id="RHEA:30187"/>
        <dbReference type="ChEBI" id="CHEBI:24646"/>
        <dbReference type="ChEBI" id="CHEBI:30839"/>
        <dbReference type="ChEBI" id="CHEBI:30864"/>
        <dbReference type="ChEBI" id="CHEBI:132124"/>
        <dbReference type="EC" id="1.3.5.2"/>
    </reaction>
</comment>
<comment type="cofactor">
    <cofactor evidence="1">
        <name>FMN</name>
        <dbReference type="ChEBI" id="CHEBI:58210"/>
    </cofactor>
    <text evidence="1">Binds 1 FMN per subunit.</text>
</comment>
<comment type="pathway">
    <text evidence="1">Pyrimidine metabolism; UMP biosynthesis via de novo pathway; orotate from (S)-dihydroorotate (quinone route): step 1/1.</text>
</comment>
<comment type="subunit">
    <text evidence="1">Monomer.</text>
</comment>
<comment type="subcellular location">
    <subcellularLocation>
        <location evidence="1">Cell membrane</location>
        <topology evidence="1">Peripheral membrane protein</topology>
    </subcellularLocation>
</comment>
<comment type="similarity">
    <text evidence="1">Belongs to the dihydroorotate dehydrogenase family. Type 2 subfamily.</text>
</comment>
<evidence type="ECO:0000255" key="1">
    <source>
        <dbReference type="HAMAP-Rule" id="MF_00225"/>
    </source>
</evidence>